<protein>
    <recommendedName>
        <fullName>Ribulose bisphosphate carboxylase large chain</fullName>
        <shortName>RuBisCO large subunit</shortName>
        <ecNumber>4.1.1.39</ecNumber>
    </recommendedName>
</protein>
<gene>
    <name type="primary">rbcL</name>
</gene>
<reference key="1">
    <citation type="submission" date="1995-04" db="EMBL/GenBank/DDBJ databases">
        <authorList>
            <person name="Savolainen V."/>
        </authorList>
    </citation>
    <scope>NUCLEOTIDE SEQUENCE [GENOMIC DNA]</scope>
    <source>
        <strain>Sample NMU1</strain>
    </source>
</reference>
<reference key="2">
    <citation type="journal article" date="1994" name="Mol. Phylogenet. Evol.">
        <title>Molecular phylogeny of families related to Celastrales based on rbcL 5' flanking sequences.</title>
        <authorList>
            <person name="Savolainen V."/>
            <person name="Manen J.F."/>
            <person name="Douzery E.J.P."/>
            <person name="Spichiger R."/>
        </authorList>
    </citation>
    <scope>NUCLEOTIDE SEQUENCE [GENOMIC DNA] OF 1-58</scope>
    <source>
        <strain>Sample NMU1</strain>
    </source>
</reference>
<accession>P31196</accession>
<keyword id="KW-0007">Acetylation</keyword>
<keyword id="KW-0113">Calvin cycle</keyword>
<keyword id="KW-0120">Carbon dioxide fixation</keyword>
<keyword id="KW-0150">Chloroplast</keyword>
<keyword id="KW-0456">Lyase</keyword>
<keyword id="KW-0488">Methylation</keyword>
<keyword id="KW-0503">Monooxygenase</keyword>
<keyword id="KW-0560">Oxidoreductase</keyword>
<keyword id="KW-0601">Photorespiration</keyword>
<keyword id="KW-0602">Photosynthesis</keyword>
<keyword id="KW-0934">Plastid</keyword>
<sequence length="143" mass="15610">MSPQTETKASVGFKAGVKEYKLNYYTPDYDTKDTDILAAFRVSPQPGVPPEEAGAAVAAESSTGTWTTVWTDGLTSLDRYKGRCYQIEPVAGEENQFIAYVAYPLDLFEEGSVTNMLTSIVGXVFGFKALCALRLEDLRIPPA</sequence>
<name>RBL_NEMMU</name>
<dbReference type="EC" id="4.1.1.39"/>
<dbReference type="EMBL" id="X69747">
    <property type="protein sequence ID" value="CAA49402.1"/>
    <property type="molecule type" value="Genomic_DNA"/>
</dbReference>
<dbReference type="PIR" id="S31534">
    <property type="entry name" value="S31534"/>
</dbReference>
<dbReference type="GO" id="GO:0009507">
    <property type="term" value="C:chloroplast"/>
    <property type="evidence" value="ECO:0007669"/>
    <property type="project" value="UniProtKB-SubCell"/>
</dbReference>
<dbReference type="GO" id="GO:0004497">
    <property type="term" value="F:monooxygenase activity"/>
    <property type="evidence" value="ECO:0007669"/>
    <property type="project" value="UniProtKB-KW"/>
</dbReference>
<dbReference type="GO" id="GO:0016984">
    <property type="term" value="F:ribulose-bisphosphate carboxylase activity"/>
    <property type="evidence" value="ECO:0007669"/>
    <property type="project" value="UniProtKB-EC"/>
</dbReference>
<dbReference type="GO" id="GO:0009853">
    <property type="term" value="P:photorespiration"/>
    <property type="evidence" value="ECO:0007669"/>
    <property type="project" value="UniProtKB-KW"/>
</dbReference>
<dbReference type="GO" id="GO:0019253">
    <property type="term" value="P:reductive pentose-phosphate cycle"/>
    <property type="evidence" value="ECO:0007669"/>
    <property type="project" value="UniProtKB-KW"/>
</dbReference>
<dbReference type="FunFam" id="3.30.70.150:FF:000001">
    <property type="entry name" value="Ribulose bisphosphate carboxylase large chain"/>
    <property type="match status" value="1"/>
</dbReference>
<dbReference type="Gene3D" id="3.30.70.150">
    <property type="entry name" value="RuBisCO large subunit, N-terminal domain"/>
    <property type="match status" value="1"/>
</dbReference>
<dbReference type="InterPro" id="IPR033966">
    <property type="entry name" value="RuBisCO"/>
</dbReference>
<dbReference type="InterPro" id="IPR017443">
    <property type="entry name" value="RuBisCO_lsu_fd_N"/>
</dbReference>
<dbReference type="InterPro" id="IPR036422">
    <property type="entry name" value="RuBisCO_lsu_N_sf"/>
</dbReference>
<dbReference type="PANTHER" id="PTHR42704">
    <property type="entry name" value="RIBULOSE BISPHOSPHATE CARBOXYLASE"/>
    <property type="match status" value="1"/>
</dbReference>
<dbReference type="PANTHER" id="PTHR42704:SF16">
    <property type="entry name" value="RIBULOSE BISPHOSPHATE CARBOXYLASE LARGE CHAIN"/>
    <property type="match status" value="1"/>
</dbReference>
<dbReference type="Pfam" id="PF02788">
    <property type="entry name" value="RuBisCO_large_N"/>
    <property type="match status" value="1"/>
</dbReference>
<dbReference type="SUPFAM" id="SSF54966">
    <property type="entry name" value="RuBisCO, large subunit, small (N-terminal) domain"/>
    <property type="match status" value="1"/>
</dbReference>
<organism>
    <name type="scientific">Nemopanthus mucronatus</name>
    <name type="common">Catberry</name>
    <dbReference type="NCBI Taxonomy" id="4302"/>
    <lineage>
        <taxon>Eukaryota</taxon>
        <taxon>Viridiplantae</taxon>
        <taxon>Streptophyta</taxon>
        <taxon>Embryophyta</taxon>
        <taxon>Tracheophyta</taxon>
        <taxon>Spermatophyta</taxon>
        <taxon>Magnoliopsida</taxon>
        <taxon>eudicotyledons</taxon>
        <taxon>Gunneridae</taxon>
        <taxon>Pentapetalae</taxon>
        <taxon>asterids</taxon>
        <taxon>campanulids</taxon>
        <taxon>Aquifoliales</taxon>
        <taxon>Aquifoliaceae</taxon>
        <taxon>Nemopanthus</taxon>
    </lineage>
</organism>
<feature type="propeptide" id="PRO_0000031313" evidence="1">
    <location>
        <begin position="1"/>
        <end position="2"/>
    </location>
</feature>
<feature type="chain" id="PRO_0000031314" description="Ribulose bisphosphate carboxylase large chain">
    <location>
        <begin position="3"/>
        <end position="143" status="greater than"/>
    </location>
</feature>
<feature type="binding site" description="in homodimeric partner" evidence="1">
    <location>
        <position position="123"/>
    </location>
    <ligand>
        <name>substrate</name>
    </ligand>
</feature>
<feature type="modified residue" description="N-acetylproline" evidence="1">
    <location>
        <position position="3"/>
    </location>
</feature>
<feature type="modified residue" description="N6,N6,N6-trimethyllysine" evidence="1">
    <location>
        <position position="14"/>
    </location>
</feature>
<feature type="non-terminal residue">
    <location>
        <position position="143"/>
    </location>
</feature>
<comment type="function">
    <text evidence="1">RuBisCO catalyzes two reactions: the carboxylation of D-ribulose 1,5-bisphosphate, the primary event in carbon dioxide fixation, as well as the oxidative fragmentation of the pentose substrate in the photorespiration process. Both reactions occur simultaneously and in competition at the same active site (By similarity).</text>
</comment>
<comment type="catalytic activity">
    <reaction>
        <text>2 (2R)-3-phosphoglycerate + 2 H(+) = D-ribulose 1,5-bisphosphate + CO2 + H2O</text>
        <dbReference type="Rhea" id="RHEA:23124"/>
        <dbReference type="ChEBI" id="CHEBI:15377"/>
        <dbReference type="ChEBI" id="CHEBI:15378"/>
        <dbReference type="ChEBI" id="CHEBI:16526"/>
        <dbReference type="ChEBI" id="CHEBI:57870"/>
        <dbReference type="ChEBI" id="CHEBI:58272"/>
        <dbReference type="EC" id="4.1.1.39"/>
    </reaction>
</comment>
<comment type="catalytic activity">
    <reaction>
        <text>D-ribulose 1,5-bisphosphate + O2 = 2-phosphoglycolate + (2R)-3-phosphoglycerate + 2 H(+)</text>
        <dbReference type="Rhea" id="RHEA:36631"/>
        <dbReference type="ChEBI" id="CHEBI:15378"/>
        <dbReference type="ChEBI" id="CHEBI:15379"/>
        <dbReference type="ChEBI" id="CHEBI:57870"/>
        <dbReference type="ChEBI" id="CHEBI:58033"/>
        <dbReference type="ChEBI" id="CHEBI:58272"/>
    </reaction>
</comment>
<comment type="subunit">
    <text evidence="1">Heterohexadecamer of 8 large chains and 8 small chains.</text>
</comment>
<comment type="subcellular location">
    <subcellularLocation>
        <location>Plastid</location>
        <location>Chloroplast</location>
    </subcellularLocation>
</comment>
<comment type="miscellaneous">
    <text evidence="1">The basic functional RuBisCO is composed of a large chain homodimer in a 'head-to-tail' conformation. In form I RuBisCO this homodimer is arranged in a barrel-like tetramer with the small subunits forming a tetrameric 'cap' on each end of the 'barrel' (By similarity).</text>
</comment>
<comment type="similarity">
    <text evidence="2">Belongs to the RuBisCO large chain family. Type I subfamily.</text>
</comment>
<proteinExistence type="inferred from homology"/>
<evidence type="ECO:0000250" key="1"/>
<evidence type="ECO:0000305" key="2"/>
<geneLocation type="chloroplast"/>